<comment type="function">
    <text evidence="3">Component of the signal recognition particle (SRP) complex receptor (SR) (By similarity). Ensures, in conjunction with the SRP complex, the correct targeting of the nascent secretory proteins to the endoplasmic reticulum membrane system (By similarity). May mediate the membrane association of SR (By similarity).</text>
</comment>
<comment type="subunit">
    <text evidence="3">Heterodimer with SRPRA.</text>
</comment>
<comment type="subcellular location">
    <subcellularLocation>
        <location evidence="2">Endoplasmic reticulum membrane</location>
        <topology evidence="5">Single-pass membrane protein</topology>
    </subcellularLocation>
</comment>
<comment type="similarity">
    <text evidence="6">Belongs to the SRP receptor beta subunit family.</text>
</comment>
<accession>Q4FZX7</accession>
<protein>
    <recommendedName>
        <fullName>Signal recognition particle receptor subunit beta</fullName>
        <shortName>SR-beta</shortName>
    </recommendedName>
</protein>
<dbReference type="EMBL" id="BC098951">
    <property type="protein sequence ID" value="AAH98951.1"/>
    <property type="molecule type" value="mRNA"/>
</dbReference>
<dbReference type="RefSeq" id="NP_001013270.1">
    <property type="nucleotide sequence ID" value="NM_001013252.1"/>
</dbReference>
<dbReference type="SMR" id="Q4FZX7"/>
<dbReference type="BioGRID" id="256772">
    <property type="interactions" value="1"/>
</dbReference>
<dbReference type="FunCoup" id="Q4FZX7">
    <property type="interactions" value="2230"/>
</dbReference>
<dbReference type="GlyGen" id="Q4FZX7">
    <property type="glycosylation" value="1 site, 1 O-linked glycan (1 site)"/>
</dbReference>
<dbReference type="iPTMnet" id="Q4FZX7"/>
<dbReference type="PhosphoSitePlus" id="Q4FZX7"/>
<dbReference type="jPOST" id="Q4FZX7"/>
<dbReference type="GeneID" id="300965"/>
<dbReference type="KEGG" id="rno:300965"/>
<dbReference type="UCSC" id="RGD:1304698">
    <property type="organism name" value="rat"/>
</dbReference>
<dbReference type="AGR" id="RGD:1304698"/>
<dbReference type="CTD" id="58477"/>
<dbReference type="RGD" id="1304698">
    <property type="gene designation" value="Srprb"/>
</dbReference>
<dbReference type="InParanoid" id="Q4FZX7"/>
<dbReference type="OrthoDB" id="41266at2759"/>
<dbReference type="PRO" id="PR:Q4FZX7"/>
<dbReference type="Proteomes" id="UP000002494">
    <property type="component" value="Unplaced"/>
</dbReference>
<dbReference type="GO" id="GO:0005737">
    <property type="term" value="C:cytoplasm"/>
    <property type="evidence" value="ECO:0000266"/>
    <property type="project" value="RGD"/>
</dbReference>
<dbReference type="GO" id="GO:0005881">
    <property type="term" value="C:cytoplasmic microtubule"/>
    <property type="evidence" value="ECO:0000250"/>
    <property type="project" value="UniProtKB"/>
</dbReference>
<dbReference type="GO" id="GO:0016020">
    <property type="term" value="C:membrane"/>
    <property type="evidence" value="ECO:0000266"/>
    <property type="project" value="RGD"/>
</dbReference>
<dbReference type="GO" id="GO:0005785">
    <property type="term" value="C:signal recognition particle receptor complex"/>
    <property type="evidence" value="ECO:0000266"/>
    <property type="project" value="RGD"/>
</dbReference>
<dbReference type="GO" id="GO:0005525">
    <property type="term" value="F:GTP binding"/>
    <property type="evidence" value="ECO:0007669"/>
    <property type="project" value="UniProtKB-KW"/>
</dbReference>
<dbReference type="GO" id="GO:0031625">
    <property type="term" value="F:ubiquitin protein ligase binding"/>
    <property type="evidence" value="ECO:0000353"/>
    <property type="project" value="RGD"/>
</dbReference>
<dbReference type="GO" id="GO:0045047">
    <property type="term" value="P:protein targeting to ER"/>
    <property type="evidence" value="ECO:0000318"/>
    <property type="project" value="GO_Central"/>
</dbReference>
<dbReference type="CDD" id="cd04105">
    <property type="entry name" value="SR_beta"/>
    <property type="match status" value="1"/>
</dbReference>
<dbReference type="FunFam" id="3.40.50.300:FF:001173">
    <property type="entry name" value="signal recognition particle receptor subunit beta"/>
    <property type="match status" value="1"/>
</dbReference>
<dbReference type="Gene3D" id="3.40.50.300">
    <property type="entry name" value="P-loop containing nucleotide triphosphate hydrolases"/>
    <property type="match status" value="1"/>
</dbReference>
<dbReference type="InterPro" id="IPR027417">
    <property type="entry name" value="P-loop_NTPase"/>
</dbReference>
<dbReference type="InterPro" id="IPR024156">
    <property type="entry name" value="Small_GTPase_ARF"/>
</dbReference>
<dbReference type="InterPro" id="IPR019009">
    <property type="entry name" value="SRP_receptor_beta_su"/>
</dbReference>
<dbReference type="PANTHER" id="PTHR45909">
    <property type="entry name" value="ADP-RIBOSYLATION FACTOR-RELATED PROTEIN 1"/>
    <property type="match status" value="1"/>
</dbReference>
<dbReference type="PANTHER" id="PTHR45909:SF1">
    <property type="entry name" value="ADP-RIBOSYLATION FACTOR-RELATED PROTEIN 1"/>
    <property type="match status" value="1"/>
</dbReference>
<dbReference type="Pfam" id="PF09439">
    <property type="entry name" value="SRPRB"/>
    <property type="match status" value="1"/>
</dbReference>
<dbReference type="SUPFAM" id="SSF52540">
    <property type="entry name" value="P-loop containing nucleoside triphosphate hydrolases"/>
    <property type="match status" value="1"/>
</dbReference>
<keyword id="KW-0256">Endoplasmic reticulum</keyword>
<keyword id="KW-0342">GTP-binding</keyword>
<keyword id="KW-0472">Membrane</keyword>
<keyword id="KW-0547">Nucleotide-binding</keyword>
<keyword id="KW-0597">Phosphoprotein</keyword>
<keyword id="KW-0675">Receptor</keyword>
<keyword id="KW-1185">Reference proteome</keyword>
<keyword id="KW-0812">Transmembrane</keyword>
<keyword id="KW-1133">Transmembrane helix</keyword>
<feature type="chain" id="PRO_0000331245" description="Signal recognition particle receptor subunit beta">
    <location>
        <begin position="1"/>
        <end position="269"/>
    </location>
</feature>
<feature type="transmembrane region" description="Helical" evidence="5">
    <location>
        <begin position="35"/>
        <end position="55"/>
    </location>
</feature>
<feature type="binding site" evidence="1">
    <location>
        <begin position="69"/>
        <end position="77"/>
    </location>
    <ligand>
        <name>GTP</name>
        <dbReference type="ChEBI" id="CHEBI:37565"/>
    </ligand>
</feature>
<feature type="binding site" evidence="1">
    <location>
        <begin position="90"/>
        <end position="93"/>
    </location>
    <ligand>
        <name>GTP</name>
        <dbReference type="ChEBI" id="CHEBI:37565"/>
    </ligand>
</feature>
<feature type="binding site" evidence="1">
    <location>
        <position position="118"/>
    </location>
    <ligand>
        <name>GTP</name>
        <dbReference type="ChEBI" id="CHEBI:37565"/>
    </ligand>
</feature>
<feature type="binding site" evidence="1">
    <location>
        <position position="246"/>
    </location>
    <ligand>
        <name>GTP</name>
        <dbReference type="ChEBI" id="CHEBI:37565"/>
    </ligand>
</feature>
<feature type="modified residue" description="Phosphoserine" evidence="4">
    <location>
        <position position="110"/>
    </location>
</feature>
<feature type="modified residue" description="Phosphothreonine" evidence="4">
    <location>
        <position position="212"/>
    </location>
</feature>
<gene>
    <name type="primary">Srprb</name>
</gene>
<evidence type="ECO:0000250" key="1"/>
<evidence type="ECO:0000250" key="2">
    <source>
        <dbReference type="UniProtKB" id="O13950"/>
    </source>
</evidence>
<evidence type="ECO:0000250" key="3">
    <source>
        <dbReference type="UniProtKB" id="P47758"/>
    </source>
</evidence>
<evidence type="ECO:0000250" key="4">
    <source>
        <dbReference type="UniProtKB" id="Q9Y5M8"/>
    </source>
</evidence>
<evidence type="ECO:0000255" key="5"/>
<evidence type="ECO:0000305" key="6"/>
<proteinExistence type="evidence at transcript level"/>
<reference key="1">
    <citation type="journal article" date="2004" name="Genome Res.">
        <title>The status, quality, and expansion of the NIH full-length cDNA project: the Mammalian Gene Collection (MGC).</title>
        <authorList>
            <consortium name="The MGC Project Team"/>
        </authorList>
    </citation>
    <scope>NUCLEOTIDE SEQUENCE [LARGE SCALE MRNA]</scope>
    <source>
        <tissue>Liver</tissue>
    </source>
</reference>
<sequence length="269" mass="29569">MASANTRRVGDGAGGAFQPYLDSLRQELQQRDPTLLSVAVAVLAVLLTLVFWKFIWSRKSSQRAVLFVGLCDSGKTLLFVRLLTGQYRDTQTSITDSSAIYKVNNNRGNSLTLIDLPGHESLRLQFLDRFKSSARAVVFVVDSATFQREVKDVAEFLYQVLIDSMALKNTPAFLVACNKQDIAMAKSAKLIQQQLEKELNTLRVTRSAAPSTLDSSSTAPAQLGKKGKEFEFSQLPLKVEFLECSAKGGRGDAGSADVQDLEKWLAKIA</sequence>
<organism>
    <name type="scientific">Rattus norvegicus</name>
    <name type="common">Rat</name>
    <dbReference type="NCBI Taxonomy" id="10116"/>
    <lineage>
        <taxon>Eukaryota</taxon>
        <taxon>Metazoa</taxon>
        <taxon>Chordata</taxon>
        <taxon>Craniata</taxon>
        <taxon>Vertebrata</taxon>
        <taxon>Euteleostomi</taxon>
        <taxon>Mammalia</taxon>
        <taxon>Eutheria</taxon>
        <taxon>Euarchontoglires</taxon>
        <taxon>Glires</taxon>
        <taxon>Rodentia</taxon>
        <taxon>Myomorpha</taxon>
        <taxon>Muroidea</taxon>
        <taxon>Muridae</taxon>
        <taxon>Murinae</taxon>
        <taxon>Rattus</taxon>
    </lineage>
</organism>
<name>SRPRB_RAT</name>